<name>PRMA_PARMW</name>
<keyword id="KW-0963">Cytoplasm</keyword>
<keyword id="KW-0489">Methyltransferase</keyword>
<keyword id="KW-0949">S-adenosyl-L-methionine</keyword>
<keyword id="KW-0808">Transferase</keyword>
<proteinExistence type="inferred from homology"/>
<gene>
    <name evidence="1" type="primary">prmA</name>
    <name type="ordered locus">SYNW0534</name>
</gene>
<sequence length="289" mass="31182">MACPPELEESLVWKLTDLGLHRHAVQHAPETPDRKQLLLWLPQPEWPEAERQQLLASLEPLAEPFGLPLPQGHWDDVADEDWSLSWKQHWQPDPVGEGLLILPAWLEVPPEHGERLVIRMDPGSAFGTGSHPTTRLCLEALEKAPPVGALVADLGCGSGVLGLAALGLGATAVVAADTDSLAVRATGDNRELNGRPADLLKVSLGSVEALQHLLEGRRADLLLCNILAPVIEALAPGFEALVAPEGRALLSGLLVDQAPRLEQVLGDLGWRVSARGSQGRWGLLEIQRR</sequence>
<evidence type="ECO:0000255" key="1">
    <source>
        <dbReference type="HAMAP-Rule" id="MF_00735"/>
    </source>
</evidence>
<accession>Q7TTX0</accession>
<protein>
    <recommendedName>
        <fullName evidence="1">Ribosomal protein L11 methyltransferase</fullName>
        <shortName evidence="1">L11 Mtase</shortName>
        <ecNumber evidence="1">2.1.1.-</ecNumber>
    </recommendedName>
</protein>
<dbReference type="EC" id="2.1.1.-" evidence="1"/>
<dbReference type="EMBL" id="BX569690">
    <property type="protein sequence ID" value="CAE07049.1"/>
    <property type="molecule type" value="Genomic_DNA"/>
</dbReference>
<dbReference type="SMR" id="Q7TTX0"/>
<dbReference type="STRING" id="84588.SYNW0534"/>
<dbReference type="KEGG" id="syw:SYNW0534"/>
<dbReference type="eggNOG" id="COG2264">
    <property type="taxonomic scope" value="Bacteria"/>
</dbReference>
<dbReference type="HOGENOM" id="CLU_049382_0_1_3"/>
<dbReference type="Proteomes" id="UP000001422">
    <property type="component" value="Chromosome"/>
</dbReference>
<dbReference type="GO" id="GO:0005737">
    <property type="term" value="C:cytoplasm"/>
    <property type="evidence" value="ECO:0007669"/>
    <property type="project" value="UniProtKB-SubCell"/>
</dbReference>
<dbReference type="GO" id="GO:0016279">
    <property type="term" value="F:protein-lysine N-methyltransferase activity"/>
    <property type="evidence" value="ECO:0007669"/>
    <property type="project" value="RHEA"/>
</dbReference>
<dbReference type="GO" id="GO:0032259">
    <property type="term" value="P:methylation"/>
    <property type="evidence" value="ECO:0007669"/>
    <property type="project" value="UniProtKB-KW"/>
</dbReference>
<dbReference type="Gene3D" id="3.40.50.150">
    <property type="entry name" value="Vaccinia Virus protein VP39"/>
    <property type="match status" value="1"/>
</dbReference>
<dbReference type="HAMAP" id="MF_00735">
    <property type="entry name" value="Methyltr_PrmA"/>
    <property type="match status" value="1"/>
</dbReference>
<dbReference type="InterPro" id="IPR050078">
    <property type="entry name" value="Ribosomal_L11_MeTrfase_PrmA"/>
</dbReference>
<dbReference type="InterPro" id="IPR004498">
    <property type="entry name" value="Ribosomal_PrmA_MeTrfase"/>
</dbReference>
<dbReference type="InterPro" id="IPR029063">
    <property type="entry name" value="SAM-dependent_MTases_sf"/>
</dbReference>
<dbReference type="NCBIfam" id="TIGR00406">
    <property type="entry name" value="prmA"/>
    <property type="match status" value="1"/>
</dbReference>
<dbReference type="PANTHER" id="PTHR43648">
    <property type="entry name" value="ELECTRON TRANSFER FLAVOPROTEIN BETA SUBUNIT LYSINE METHYLTRANSFERASE"/>
    <property type="match status" value="1"/>
</dbReference>
<dbReference type="PANTHER" id="PTHR43648:SF1">
    <property type="entry name" value="ELECTRON TRANSFER FLAVOPROTEIN BETA SUBUNIT LYSINE METHYLTRANSFERASE"/>
    <property type="match status" value="1"/>
</dbReference>
<dbReference type="Pfam" id="PF06325">
    <property type="entry name" value="PrmA"/>
    <property type="match status" value="1"/>
</dbReference>
<dbReference type="SUPFAM" id="SSF53335">
    <property type="entry name" value="S-adenosyl-L-methionine-dependent methyltransferases"/>
    <property type="match status" value="1"/>
</dbReference>
<reference key="1">
    <citation type="journal article" date="2003" name="Nature">
        <title>The genome of a motile marine Synechococcus.</title>
        <authorList>
            <person name="Palenik B."/>
            <person name="Brahamsha B."/>
            <person name="Larimer F.W."/>
            <person name="Land M.L."/>
            <person name="Hauser L."/>
            <person name="Chain P."/>
            <person name="Lamerdin J.E."/>
            <person name="Regala W."/>
            <person name="Allen E.E."/>
            <person name="McCarren J."/>
            <person name="Paulsen I.T."/>
            <person name="Dufresne A."/>
            <person name="Partensky F."/>
            <person name="Webb E.A."/>
            <person name="Waterbury J."/>
        </authorList>
    </citation>
    <scope>NUCLEOTIDE SEQUENCE [LARGE SCALE GENOMIC DNA]</scope>
    <source>
        <strain>WH8102</strain>
    </source>
</reference>
<organism>
    <name type="scientific">Parasynechococcus marenigrum (strain WH8102)</name>
    <dbReference type="NCBI Taxonomy" id="84588"/>
    <lineage>
        <taxon>Bacteria</taxon>
        <taxon>Bacillati</taxon>
        <taxon>Cyanobacteriota</taxon>
        <taxon>Cyanophyceae</taxon>
        <taxon>Synechococcales</taxon>
        <taxon>Prochlorococcaceae</taxon>
        <taxon>Parasynechococcus</taxon>
        <taxon>Parasynechococcus marenigrum</taxon>
    </lineage>
</organism>
<comment type="function">
    <text evidence="1">Methylates ribosomal protein L11.</text>
</comment>
<comment type="catalytic activity">
    <reaction evidence="1">
        <text>L-lysyl-[protein] + 3 S-adenosyl-L-methionine = N(6),N(6),N(6)-trimethyl-L-lysyl-[protein] + 3 S-adenosyl-L-homocysteine + 3 H(+)</text>
        <dbReference type="Rhea" id="RHEA:54192"/>
        <dbReference type="Rhea" id="RHEA-COMP:9752"/>
        <dbReference type="Rhea" id="RHEA-COMP:13826"/>
        <dbReference type="ChEBI" id="CHEBI:15378"/>
        <dbReference type="ChEBI" id="CHEBI:29969"/>
        <dbReference type="ChEBI" id="CHEBI:57856"/>
        <dbReference type="ChEBI" id="CHEBI:59789"/>
        <dbReference type="ChEBI" id="CHEBI:61961"/>
    </reaction>
</comment>
<comment type="subcellular location">
    <subcellularLocation>
        <location evidence="1">Cytoplasm</location>
    </subcellularLocation>
</comment>
<comment type="similarity">
    <text evidence="1">Belongs to the methyltransferase superfamily. PrmA family.</text>
</comment>
<feature type="chain" id="PRO_0000192324" description="Ribosomal protein L11 methyltransferase">
    <location>
        <begin position="1"/>
        <end position="289"/>
    </location>
</feature>
<feature type="binding site" evidence="1">
    <location>
        <position position="134"/>
    </location>
    <ligand>
        <name>S-adenosyl-L-methionine</name>
        <dbReference type="ChEBI" id="CHEBI:59789"/>
    </ligand>
</feature>
<feature type="binding site" evidence="1">
    <location>
        <position position="155"/>
    </location>
    <ligand>
        <name>S-adenosyl-L-methionine</name>
        <dbReference type="ChEBI" id="CHEBI:59789"/>
    </ligand>
</feature>
<feature type="binding site" evidence="1">
    <location>
        <position position="177"/>
    </location>
    <ligand>
        <name>S-adenosyl-L-methionine</name>
        <dbReference type="ChEBI" id="CHEBI:59789"/>
    </ligand>
</feature>
<feature type="binding site" evidence="1">
    <location>
        <position position="225"/>
    </location>
    <ligand>
        <name>S-adenosyl-L-methionine</name>
        <dbReference type="ChEBI" id="CHEBI:59789"/>
    </ligand>
</feature>